<protein>
    <recommendedName>
        <fullName evidence="1">UPF0178 protein Bcep18194_A4809</fullName>
    </recommendedName>
</protein>
<accession>Q39GL2</accession>
<organism>
    <name type="scientific">Burkholderia lata (strain ATCC 17760 / DSM 23089 / LMG 22485 / NCIMB 9086 / R18194 / 383)</name>
    <dbReference type="NCBI Taxonomy" id="482957"/>
    <lineage>
        <taxon>Bacteria</taxon>
        <taxon>Pseudomonadati</taxon>
        <taxon>Pseudomonadota</taxon>
        <taxon>Betaproteobacteria</taxon>
        <taxon>Burkholderiales</taxon>
        <taxon>Burkholderiaceae</taxon>
        <taxon>Burkholderia</taxon>
        <taxon>Burkholderia cepacia complex</taxon>
    </lineage>
</organism>
<reference key="1">
    <citation type="submission" date="2005-10" db="EMBL/GenBank/DDBJ databases">
        <title>Complete sequence of chromosome 1 of Burkholderia sp. 383.</title>
        <authorList>
            <consortium name="US DOE Joint Genome Institute"/>
            <person name="Copeland A."/>
            <person name="Lucas S."/>
            <person name="Lapidus A."/>
            <person name="Barry K."/>
            <person name="Detter J.C."/>
            <person name="Glavina T."/>
            <person name="Hammon N."/>
            <person name="Israni S."/>
            <person name="Pitluck S."/>
            <person name="Chain P."/>
            <person name="Malfatti S."/>
            <person name="Shin M."/>
            <person name="Vergez L."/>
            <person name="Schmutz J."/>
            <person name="Larimer F."/>
            <person name="Land M."/>
            <person name="Kyrpides N."/>
            <person name="Lykidis A."/>
            <person name="Richardson P."/>
        </authorList>
    </citation>
    <scope>NUCLEOTIDE SEQUENCE [LARGE SCALE GENOMIC DNA]</scope>
    <source>
        <strain>ATCC 17760 / DSM 23089 / LMG 22485 / NCIMB 9086 / R18194 / 383</strain>
    </source>
</reference>
<evidence type="ECO:0000255" key="1">
    <source>
        <dbReference type="HAMAP-Rule" id="MF_00489"/>
    </source>
</evidence>
<comment type="similarity">
    <text evidence="1">Belongs to the UPF0178 family.</text>
</comment>
<gene>
    <name type="ordered locus">Bcep18194_A4809</name>
</gene>
<sequence>MQVLVDADACPAVIKDMLFRAARRAEICVTLVANQFLRTPPSPFIKAVQVPAGFDVADARIVELVEAGDLVITADIPLAAAVLDKGAHALDPRGNWFSRENIEERLSTRAMMDQLRSAGIDTGGPAPFSARDGKAFASQLDRFLARHGKP</sequence>
<name>Y4809_BURL3</name>
<proteinExistence type="inferred from homology"/>
<dbReference type="EMBL" id="CP000151">
    <property type="protein sequence ID" value="ABB08404.1"/>
    <property type="molecule type" value="Genomic_DNA"/>
</dbReference>
<dbReference type="RefSeq" id="WP_011351963.1">
    <property type="nucleotide sequence ID" value="NZ_CADFCT010000004.1"/>
</dbReference>
<dbReference type="KEGG" id="bur:Bcep18194_A4809"/>
<dbReference type="PATRIC" id="fig|482957.22.peg.1731"/>
<dbReference type="HOGENOM" id="CLU_106619_2_1_4"/>
<dbReference type="Proteomes" id="UP000002705">
    <property type="component" value="Chromosome 1"/>
</dbReference>
<dbReference type="CDD" id="cd18720">
    <property type="entry name" value="PIN_YqxD-like"/>
    <property type="match status" value="1"/>
</dbReference>
<dbReference type="HAMAP" id="MF_00489">
    <property type="entry name" value="UPF0178"/>
    <property type="match status" value="1"/>
</dbReference>
<dbReference type="InterPro" id="IPR003791">
    <property type="entry name" value="UPF0178"/>
</dbReference>
<dbReference type="NCBIfam" id="NF001095">
    <property type="entry name" value="PRK00124.1"/>
    <property type="match status" value="1"/>
</dbReference>
<dbReference type="PANTHER" id="PTHR35146">
    <property type="entry name" value="UPF0178 PROTEIN YAII"/>
    <property type="match status" value="1"/>
</dbReference>
<dbReference type="PANTHER" id="PTHR35146:SF1">
    <property type="entry name" value="UPF0178 PROTEIN YAII"/>
    <property type="match status" value="1"/>
</dbReference>
<dbReference type="Pfam" id="PF02639">
    <property type="entry name" value="DUF188"/>
    <property type="match status" value="1"/>
</dbReference>
<feature type="chain" id="PRO_0000241810" description="UPF0178 protein Bcep18194_A4809">
    <location>
        <begin position="1"/>
        <end position="150"/>
    </location>
</feature>